<organism>
    <name type="scientific">Emiliania huxleyi</name>
    <name type="common">Coccolithophore</name>
    <name type="synonym">Pontosphaera huxleyi</name>
    <dbReference type="NCBI Taxonomy" id="2903"/>
    <lineage>
        <taxon>Eukaryota</taxon>
        <taxon>Haptista</taxon>
        <taxon>Haptophyta</taxon>
        <taxon>Prymnesiophyceae</taxon>
        <taxon>Isochrysidales</taxon>
        <taxon>Noelaerhabdaceae</taxon>
        <taxon>Emiliania</taxon>
    </lineage>
</organism>
<keyword id="KW-0066">ATP synthesis</keyword>
<keyword id="KW-0139">CF(1)</keyword>
<keyword id="KW-0150">Chloroplast</keyword>
<keyword id="KW-0375">Hydrogen ion transport</keyword>
<keyword id="KW-0406">Ion transport</keyword>
<keyword id="KW-0472">Membrane</keyword>
<keyword id="KW-0934">Plastid</keyword>
<keyword id="KW-0793">Thylakoid</keyword>
<keyword id="KW-0813">Transport</keyword>
<sequence length="130" mass="13943">MSLNVRVITPDRIVWDANAEELILPSSTGQLGILTDHAPLLTALDIGVMRLKTGGNWISFVLMEGFAEVEDNKITILCNGAEEGASIDASTAQAALEKVTLLVDEAATKKEKIEATIELRKAKARLQAVA</sequence>
<dbReference type="EMBL" id="AY741371">
    <property type="protein sequence ID" value="AAX13837.1"/>
    <property type="molecule type" value="Genomic_DNA"/>
</dbReference>
<dbReference type="RefSeq" id="YP_277338.1">
    <property type="nucleotide sequence ID" value="NC_007288.1"/>
</dbReference>
<dbReference type="SMR" id="Q4G3C9"/>
<dbReference type="STRING" id="2903.Q4G3C9"/>
<dbReference type="GeneID" id="3562514"/>
<dbReference type="GO" id="GO:0009535">
    <property type="term" value="C:chloroplast thylakoid membrane"/>
    <property type="evidence" value="ECO:0007669"/>
    <property type="project" value="UniProtKB-SubCell"/>
</dbReference>
<dbReference type="GO" id="GO:0045259">
    <property type="term" value="C:proton-transporting ATP synthase complex"/>
    <property type="evidence" value="ECO:0007669"/>
    <property type="project" value="UniProtKB-KW"/>
</dbReference>
<dbReference type="GO" id="GO:0005524">
    <property type="term" value="F:ATP binding"/>
    <property type="evidence" value="ECO:0007669"/>
    <property type="project" value="UniProtKB-UniRule"/>
</dbReference>
<dbReference type="GO" id="GO:0046933">
    <property type="term" value="F:proton-transporting ATP synthase activity, rotational mechanism"/>
    <property type="evidence" value="ECO:0007669"/>
    <property type="project" value="UniProtKB-UniRule"/>
</dbReference>
<dbReference type="CDD" id="cd12152">
    <property type="entry name" value="F1-ATPase_delta"/>
    <property type="match status" value="1"/>
</dbReference>
<dbReference type="Gene3D" id="2.60.15.10">
    <property type="entry name" value="F0F1 ATP synthase delta/epsilon subunit, N-terminal"/>
    <property type="match status" value="1"/>
</dbReference>
<dbReference type="Gene3D" id="1.10.287.540">
    <property type="entry name" value="Helix hairpin bin"/>
    <property type="match status" value="1"/>
</dbReference>
<dbReference type="HAMAP" id="MF_00530">
    <property type="entry name" value="ATP_synth_epsil_bac"/>
    <property type="match status" value="1"/>
</dbReference>
<dbReference type="InterPro" id="IPR001469">
    <property type="entry name" value="ATP_synth_F1_dsu/esu"/>
</dbReference>
<dbReference type="InterPro" id="IPR020546">
    <property type="entry name" value="ATP_synth_F1_dsu/esu_N"/>
</dbReference>
<dbReference type="InterPro" id="IPR036771">
    <property type="entry name" value="ATPsynth_dsu/esu_N"/>
</dbReference>
<dbReference type="NCBIfam" id="TIGR01216">
    <property type="entry name" value="ATP_synt_epsi"/>
    <property type="match status" value="1"/>
</dbReference>
<dbReference type="PANTHER" id="PTHR13822">
    <property type="entry name" value="ATP SYNTHASE DELTA/EPSILON CHAIN"/>
    <property type="match status" value="1"/>
</dbReference>
<dbReference type="PANTHER" id="PTHR13822:SF10">
    <property type="entry name" value="ATP SYNTHASE EPSILON CHAIN, CHLOROPLASTIC"/>
    <property type="match status" value="1"/>
</dbReference>
<dbReference type="Pfam" id="PF02823">
    <property type="entry name" value="ATP-synt_DE_N"/>
    <property type="match status" value="1"/>
</dbReference>
<dbReference type="SUPFAM" id="SSF51344">
    <property type="entry name" value="Epsilon subunit of F1F0-ATP synthase N-terminal domain"/>
    <property type="match status" value="1"/>
</dbReference>
<protein>
    <recommendedName>
        <fullName evidence="1">ATP synthase epsilon chain, chloroplastic</fullName>
    </recommendedName>
    <alternativeName>
        <fullName evidence="1">ATP synthase F1 sector epsilon subunit</fullName>
    </alternativeName>
    <alternativeName>
        <fullName evidence="1">F-ATPase epsilon subunit</fullName>
    </alternativeName>
</protein>
<reference key="1">
    <citation type="journal article" date="2005" name="DNA Res.">
        <title>The complete plastid genome sequence of the haptophyte Emiliania huxleyi: a comparison to other plastid genomes.</title>
        <authorList>
            <person name="Sanchez-Puerta M.V."/>
            <person name="Bachvaroff T.R."/>
            <person name="Delwiche C.F."/>
        </authorList>
    </citation>
    <scope>NUCLEOTIDE SEQUENCE [LARGE SCALE GENOMIC DNA]</scope>
    <source>
        <strain>CCMP373 / CSIRO-CS-57 / BT6</strain>
    </source>
</reference>
<evidence type="ECO:0000255" key="1">
    <source>
        <dbReference type="HAMAP-Rule" id="MF_00530"/>
    </source>
</evidence>
<gene>
    <name evidence="1" type="primary">atpE</name>
</gene>
<proteinExistence type="inferred from homology"/>
<comment type="function">
    <text evidence="1">Produces ATP from ADP in the presence of a proton gradient across the membrane.</text>
</comment>
<comment type="subunit">
    <text evidence="1">F-type ATPases have 2 components, CF(1) - the catalytic core - and CF(0) - the membrane proton channel. CF(1) has five subunits: alpha(3), beta(3), gamma(1), delta(1), epsilon(1). CF(0) has three main subunits: a, b and c.</text>
</comment>
<comment type="subcellular location">
    <subcellularLocation>
        <location evidence="1">Plastid</location>
        <location evidence="1">Chloroplast thylakoid membrane</location>
        <topology evidence="1">Peripheral membrane protein</topology>
    </subcellularLocation>
</comment>
<comment type="similarity">
    <text evidence="1">Belongs to the ATPase epsilon chain family.</text>
</comment>
<name>ATPE_EMIHU</name>
<feature type="chain" id="PRO_0000275228" description="ATP synthase epsilon chain, chloroplastic">
    <location>
        <begin position="1"/>
        <end position="130"/>
    </location>
</feature>
<accession>Q4G3C9</accession>
<geneLocation type="chloroplast"/>